<accession>C0SPB4</accession>
<accession>O07524</accession>
<accession>Q796V5</accession>
<protein>
    <recommendedName>
        <fullName>Uncharacterized ABC transporter ATP-binding protein YhaQ</fullName>
    </recommendedName>
</protein>
<feature type="chain" id="PRO_0000380256" description="Uncharacterized ABC transporter ATP-binding protein YhaQ">
    <location>
        <begin position="1"/>
        <end position="298"/>
    </location>
</feature>
<feature type="domain" description="ABC transporter" evidence="1">
    <location>
        <begin position="2"/>
        <end position="229"/>
    </location>
</feature>
<feature type="binding site" evidence="1">
    <location>
        <begin position="34"/>
        <end position="41"/>
    </location>
    <ligand>
        <name>ATP</name>
        <dbReference type="ChEBI" id="CHEBI:30616"/>
    </ligand>
</feature>
<feature type="sequence conflict" description="In Ref. 1; CAA74424." evidence="2" ref="1">
    <original>S</original>
    <variation>A</variation>
    <location>
        <position position="131"/>
    </location>
</feature>
<gene>
    <name type="primary">yhaQ</name>
    <name type="ordered locus">BSU09890</name>
</gene>
<name>YHAQ_BACSU</name>
<organism>
    <name type="scientific">Bacillus subtilis (strain 168)</name>
    <dbReference type="NCBI Taxonomy" id="224308"/>
    <lineage>
        <taxon>Bacteria</taxon>
        <taxon>Bacillati</taxon>
        <taxon>Bacillota</taxon>
        <taxon>Bacilli</taxon>
        <taxon>Bacillales</taxon>
        <taxon>Bacillaceae</taxon>
        <taxon>Bacillus</taxon>
    </lineage>
</organism>
<comment type="subcellular location">
    <subcellularLocation>
        <location evidence="2">Cell membrane</location>
        <topology evidence="2">Peripheral membrane protein</topology>
    </subcellularLocation>
</comment>
<comment type="similarity">
    <text evidence="2">Belongs to the ABC transporter superfamily.</text>
</comment>
<keyword id="KW-0067">ATP-binding</keyword>
<keyword id="KW-1003">Cell membrane</keyword>
<keyword id="KW-0472">Membrane</keyword>
<keyword id="KW-0547">Nucleotide-binding</keyword>
<keyword id="KW-1185">Reference proteome</keyword>
<keyword id="KW-0813">Transport</keyword>
<reference key="1">
    <citation type="journal article" date="1998" name="Microbiology">
        <title>The 172 kb prkA-addAB region from 83 degrees to 97 degrees of the Bacillus subtilis chromosome contains several dysfunctional genes, the glyB marker, many genes encoding transporter proteins, and the ubiquitous hit gene.</title>
        <authorList>
            <person name="Noback M.A."/>
            <person name="Holsappel S."/>
            <person name="Kiewiet R."/>
            <person name="Terpstra P."/>
            <person name="Wambutt R."/>
            <person name="Wedler H."/>
            <person name="Venema G."/>
            <person name="Bron S."/>
        </authorList>
    </citation>
    <scope>NUCLEOTIDE SEQUENCE [GENOMIC DNA]</scope>
    <source>
        <strain>168</strain>
    </source>
</reference>
<reference key="2">
    <citation type="journal article" date="1997" name="Nature">
        <title>The complete genome sequence of the Gram-positive bacterium Bacillus subtilis.</title>
        <authorList>
            <person name="Kunst F."/>
            <person name="Ogasawara N."/>
            <person name="Moszer I."/>
            <person name="Albertini A.M."/>
            <person name="Alloni G."/>
            <person name="Azevedo V."/>
            <person name="Bertero M.G."/>
            <person name="Bessieres P."/>
            <person name="Bolotin A."/>
            <person name="Borchert S."/>
            <person name="Borriss R."/>
            <person name="Boursier L."/>
            <person name="Brans A."/>
            <person name="Braun M."/>
            <person name="Brignell S.C."/>
            <person name="Bron S."/>
            <person name="Brouillet S."/>
            <person name="Bruschi C.V."/>
            <person name="Caldwell B."/>
            <person name="Capuano V."/>
            <person name="Carter N.M."/>
            <person name="Choi S.-K."/>
            <person name="Codani J.-J."/>
            <person name="Connerton I.F."/>
            <person name="Cummings N.J."/>
            <person name="Daniel R.A."/>
            <person name="Denizot F."/>
            <person name="Devine K.M."/>
            <person name="Duesterhoeft A."/>
            <person name="Ehrlich S.D."/>
            <person name="Emmerson P.T."/>
            <person name="Entian K.-D."/>
            <person name="Errington J."/>
            <person name="Fabret C."/>
            <person name="Ferrari E."/>
            <person name="Foulger D."/>
            <person name="Fritz C."/>
            <person name="Fujita M."/>
            <person name="Fujita Y."/>
            <person name="Fuma S."/>
            <person name="Galizzi A."/>
            <person name="Galleron N."/>
            <person name="Ghim S.-Y."/>
            <person name="Glaser P."/>
            <person name="Goffeau A."/>
            <person name="Golightly E.J."/>
            <person name="Grandi G."/>
            <person name="Guiseppi G."/>
            <person name="Guy B.J."/>
            <person name="Haga K."/>
            <person name="Haiech J."/>
            <person name="Harwood C.R."/>
            <person name="Henaut A."/>
            <person name="Hilbert H."/>
            <person name="Holsappel S."/>
            <person name="Hosono S."/>
            <person name="Hullo M.-F."/>
            <person name="Itaya M."/>
            <person name="Jones L.-M."/>
            <person name="Joris B."/>
            <person name="Karamata D."/>
            <person name="Kasahara Y."/>
            <person name="Klaerr-Blanchard M."/>
            <person name="Klein C."/>
            <person name="Kobayashi Y."/>
            <person name="Koetter P."/>
            <person name="Koningstein G."/>
            <person name="Krogh S."/>
            <person name="Kumano M."/>
            <person name="Kurita K."/>
            <person name="Lapidus A."/>
            <person name="Lardinois S."/>
            <person name="Lauber J."/>
            <person name="Lazarevic V."/>
            <person name="Lee S.-M."/>
            <person name="Levine A."/>
            <person name="Liu H."/>
            <person name="Masuda S."/>
            <person name="Mauel C."/>
            <person name="Medigue C."/>
            <person name="Medina N."/>
            <person name="Mellado R.P."/>
            <person name="Mizuno M."/>
            <person name="Moestl D."/>
            <person name="Nakai S."/>
            <person name="Noback M."/>
            <person name="Noone D."/>
            <person name="O'Reilly M."/>
            <person name="Ogawa K."/>
            <person name="Ogiwara A."/>
            <person name="Oudega B."/>
            <person name="Park S.-H."/>
            <person name="Parro V."/>
            <person name="Pohl T.M."/>
            <person name="Portetelle D."/>
            <person name="Porwollik S."/>
            <person name="Prescott A.M."/>
            <person name="Presecan E."/>
            <person name="Pujic P."/>
            <person name="Purnelle B."/>
            <person name="Rapoport G."/>
            <person name="Rey M."/>
            <person name="Reynolds S."/>
            <person name="Rieger M."/>
            <person name="Rivolta C."/>
            <person name="Rocha E."/>
            <person name="Roche B."/>
            <person name="Rose M."/>
            <person name="Sadaie Y."/>
            <person name="Sato T."/>
            <person name="Scanlan E."/>
            <person name="Schleich S."/>
            <person name="Schroeter R."/>
            <person name="Scoffone F."/>
            <person name="Sekiguchi J."/>
            <person name="Sekowska A."/>
            <person name="Seror S.J."/>
            <person name="Serror P."/>
            <person name="Shin B.-S."/>
            <person name="Soldo B."/>
            <person name="Sorokin A."/>
            <person name="Tacconi E."/>
            <person name="Takagi T."/>
            <person name="Takahashi H."/>
            <person name="Takemaru K."/>
            <person name="Takeuchi M."/>
            <person name="Tamakoshi A."/>
            <person name="Tanaka T."/>
            <person name="Terpstra P."/>
            <person name="Tognoni A."/>
            <person name="Tosato V."/>
            <person name="Uchiyama S."/>
            <person name="Vandenbol M."/>
            <person name="Vannier F."/>
            <person name="Vassarotti A."/>
            <person name="Viari A."/>
            <person name="Wambutt R."/>
            <person name="Wedler E."/>
            <person name="Wedler H."/>
            <person name="Weitzenegger T."/>
            <person name="Winters P."/>
            <person name="Wipat A."/>
            <person name="Yamamoto H."/>
            <person name="Yamane K."/>
            <person name="Yasumoto K."/>
            <person name="Yata K."/>
            <person name="Yoshida K."/>
            <person name="Yoshikawa H.-F."/>
            <person name="Zumstein E."/>
            <person name="Yoshikawa H."/>
            <person name="Danchin A."/>
        </authorList>
    </citation>
    <scope>NUCLEOTIDE SEQUENCE [LARGE SCALE GENOMIC DNA]</scope>
    <source>
        <strain>168</strain>
    </source>
</reference>
<reference key="3">
    <citation type="journal article" date="2009" name="Microbiology">
        <title>From a consortium sequence to a unified sequence: the Bacillus subtilis 168 reference genome a decade later.</title>
        <authorList>
            <person name="Barbe V."/>
            <person name="Cruveiller S."/>
            <person name="Kunst F."/>
            <person name="Lenoble P."/>
            <person name="Meurice G."/>
            <person name="Sekowska A."/>
            <person name="Vallenet D."/>
            <person name="Wang T."/>
            <person name="Moszer I."/>
            <person name="Medigue C."/>
            <person name="Danchin A."/>
        </authorList>
    </citation>
    <scope>SEQUENCE REVISION TO 131</scope>
</reference>
<evidence type="ECO:0000255" key="1">
    <source>
        <dbReference type="PROSITE-ProRule" id="PRU00434"/>
    </source>
</evidence>
<evidence type="ECO:0000305" key="2"/>
<sequence>MLTIDHVTKTFGDYKAVDGLDLDIPEQQMFGLLGANGAGKTTTFRMILGLLSITEGSISWKGRPVNYHISNKIGYLPEERGLYPKMKVRDQLVYLARLKGMEKREAVKELGTWLERFNITDYENKKVEELSKGNQQKIQFISAVLHKPELLILDEPFSGLDPVNVELLKEAVISLKNSGVSILFSSHRMEHVEELCENLCILQKGKPVVQGKLKEIKRSFGKKNVTIHSDDDLRFLQSHEGILQWKETADGVKLQIANEDISQEIFAMLQGKGFIRKFELEEPSLHDIFIEKVGAVYE</sequence>
<dbReference type="EMBL" id="Y14078">
    <property type="protein sequence ID" value="CAA74424.1"/>
    <property type="molecule type" value="Genomic_DNA"/>
</dbReference>
<dbReference type="EMBL" id="AL009126">
    <property type="protein sequence ID" value="CAB12829.2"/>
    <property type="molecule type" value="Genomic_DNA"/>
</dbReference>
<dbReference type="PIR" id="C69819">
    <property type="entry name" value="C69819"/>
</dbReference>
<dbReference type="RefSeq" id="NP_388870.2">
    <property type="nucleotide sequence ID" value="NC_000964.3"/>
</dbReference>
<dbReference type="RefSeq" id="WP_003233262.1">
    <property type="nucleotide sequence ID" value="NZ_OZ025638.1"/>
</dbReference>
<dbReference type="SMR" id="C0SPB4"/>
<dbReference type="FunCoup" id="C0SPB4">
    <property type="interactions" value="134"/>
</dbReference>
<dbReference type="STRING" id="224308.BSU09890"/>
<dbReference type="PaxDb" id="224308-BSU09890"/>
<dbReference type="EnsemblBacteria" id="CAB12829">
    <property type="protein sequence ID" value="CAB12829"/>
    <property type="gene ID" value="BSU_09890"/>
</dbReference>
<dbReference type="GeneID" id="936283"/>
<dbReference type="KEGG" id="bsu:BSU09890"/>
<dbReference type="PATRIC" id="fig|224308.179.peg.1062"/>
<dbReference type="eggNOG" id="COG4152">
    <property type="taxonomic scope" value="Bacteria"/>
</dbReference>
<dbReference type="InParanoid" id="C0SPB4"/>
<dbReference type="OrthoDB" id="9801987at2"/>
<dbReference type="PhylomeDB" id="C0SPB4"/>
<dbReference type="BioCyc" id="BSUB:BSU09890-MONOMER"/>
<dbReference type="Proteomes" id="UP000001570">
    <property type="component" value="Chromosome"/>
</dbReference>
<dbReference type="GO" id="GO:0005886">
    <property type="term" value="C:plasma membrane"/>
    <property type="evidence" value="ECO:0007669"/>
    <property type="project" value="UniProtKB-SubCell"/>
</dbReference>
<dbReference type="GO" id="GO:0005524">
    <property type="term" value="F:ATP binding"/>
    <property type="evidence" value="ECO:0007669"/>
    <property type="project" value="UniProtKB-KW"/>
</dbReference>
<dbReference type="GO" id="GO:0016887">
    <property type="term" value="F:ATP hydrolysis activity"/>
    <property type="evidence" value="ECO:0007669"/>
    <property type="project" value="InterPro"/>
</dbReference>
<dbReference type="Gene3D" id="3.40.50.300">
    <property type="entry name" value="P-loop containing nucleotide triphosphate hydrolases"/>
    <property type="match status" value="1"/>
</dbReference>
<dbReference type="InterPro" id="IPR003593">
    <property type="entry name" value="AAA+_ATPase"/>
</dbReference>
<dbReference type="InterPro" id="IPR003439">
    <property type="entry name" value="ABC_transporter-like_ATP-bd"/>
</dbReference>
<dbReference type="InterPro" id="IPR017871">
    <property type="entry name" value="ABC_transporter-like_CS"/>
</dbReference>
<dbReference type="InterPro" id="IPR050763">
    <property type="entry name" value="ABC_transporter_ATP-binding"/>
</dbReference>
<dbReference type="InterPro" id="IPR025302">
    <property type="entry name" value="DrrA1-3-like_C"/>
</dbReference>
<dbReference type="InterPro" id="IPR027417">
    <property type="entry name" value="P-loop_NTPase"/>
</dbReference>
<dbReference type="PANTHER" id="PTHR42711">
    <property type="entry name" value="ABC TRANSPORTER ATP-BINDING PROTEIN"/>
    <property type="match status" value="1"/>
</dbReference>
<dbReference type="PANTHER" id="PTHR42711:SF5">
    <property type="entry name" value="ABC TRANSPORTER ATP-BINDING PROTEIN NATA"/>
    <property type="match status" value="1"/>
</dbReference>
<dbReference type="Pfam" id="PF00005">
    <property type="entry name" value="ABC_tran"/>
    <property type="match status" value="1"/>
</dbReference>
<dbReference type="Pfam" id="PF13732">
    <property type="entry name" value="DrrA1-3_C"/>
    <property type="match status" value="1"/>
</dbReference>
<dbReference type="SMART" id="SM00382">
    <property type="entry name" value="AAA"/>
    <property type="match status" value="1"/>
</dbReference>
<dbReference type="SUPFAM" id="SSF52540">
    <property type="entry name" value="P-loop containing nucleoside triphosphate hydrolases"/>
    <property type="match status" value="1"/>
</dbReference>
<dbReference type="PROSITE" id="PS00211">
    <property type="entry name" value="ABC_TRANSPORTER_1"/>
    <property type="match status" value="1"/>
</dbReference>
<dbReference type="PROSITE" id="PS50893">
    <property type="entry name" value="ABC_TRANSPORTER_2"/>
    <property type="match status" value="1"/>
</dbReference>
<proteinExistence type="inferred from homology"/>